<dbReference type="EC" id="6.1.1.20" evidence="1"/>
<dbReference type="EMBL" id="CP000447">
    <property type="protein sequence ID" value="ABI71558.1"/>
    <property type="molecule type" value="Genomic_DNA"/>
</dbReference>
<dbReference type="RefSeq" id="WP_011637174.1">
    <property type="nucleotide sequence ID" value="NC_008345.1"/>
</dbReference>
<dbReference type="SMR" id="Q083K7"/>
<dbReference type="STRING" id="318167.Sfri_1708"/>
<dbReference type="KEGG" id="sfr:Sfri_1708"/>
<dbReference type="eggNOG" id="COG0016">
    <property type="taxonomic scope" value="Bacteria"/>
</dbReference>
<dbReference type="HOGENOM" id="CLU_025086_0_1_6"/>
<dbReference type="OrthoDB" id="9800719at2"/>
<dbReference type="Proteomes" id="UP000000684">
    <property type="component" value="Chromosome"/>
</dbReference>
<dbReference type="GO" id="GO:0005737">
    <property type="term" value="C:cytoplasm"/>
    <property type="evidence" value="ECO:0007669"/>
    <property type="project" value="UniProtKB-SubCell"/>
</dbReference>
<dbReference type="GO" id="GO:0005524">
    <property type="term" value="F:ATP binding"/>
    <property type="evidence" value="ECO:0007669"/>
    <property type="project" value="UniProtKB-UniRule"/>
</dbReference>
<dbReference type="GO" id="GO:0000287">
    <property type="term" value="F:magnesium ion binding"/>
    <property type="evidence" value="ECO:0007669"/>
    <property type="project" value="UniProtKB-UniRule"/>
</dbReference>
<dbReference type="GO" id="GO:0004826">
    <property type="term" value="F:phenylalanine-tRNA ligase activity"/>
    <property type="evidence" value="ECO:0007669"/>
    <property type="project" value="UniProtKB-UniRule"/>
</dbReference>
<dbReference type="GO" id="GO:0000049">
    <property type="term" value="F:tRNA binding"/>
    <property type="evidence" value="ECO:0007669"/>
    <property type="project" value="InterPro"/>
</dbReference>
<dbReference type="GO" id="GO:0006432">
    <property type="term" value="P:phenylalanyl-tRNA aminoacylation"/>
    <property type="evidence" value="ECO:0007669"/>
    <property type="project" value="UniProtKB-UniRule"/>
</dbReference>
<dbReference type="CDD" id="cd00496">
    <property type="entry name" value="PheRS_alpha_core"/>
    <property type="match status" value="1"/>
</dbReference>
<dbReference type="FunFam" id="3.30.930.10:FF:000003">
    <property type="entry name" value="Phenylalanine--tRNA ligase alpha subunit"/>
    <property type="match status" value="1"/>
</dbReference>
<dbReference type="Gene3D" id="3.30.930.10">
    <property type="entry name" value="Bira Bifunctional Protein, Domain 2"/>
    <property type="match status" value="1"/>
</dbReference>
<dbReference type="HAMAP" id="MF_00281">
    <property type="entry name" value="Phe_tRNA_synth_alpha1"/>
    <property type="match status" value="1"/>
</dbReference>
<dbReference type="InterPro" id="IPR006195">
    <property type="entry name" value="aa-tRNA-synth_II"/>
</dbReference>
<dbReference type="InterPro" id="IPR045864">
    <property type="entry name" value="aa-tRNA-synth_II/BPL/LPL"/>
</dbReference>
<dbReference type="InterPro" id="IPR004529">
    <property type="entry name" value="Phe-tRNA-synth_IIc_asu"/>
</dbReference>
<dbReference type="InterPro" id="IPR004188">
    <property type="entry name" value="Phe-tRNA_ligase_II_N"/>
</dbReference>
<dbReference type="InterPro" id="IPR022911">
    <property type="entry name" value="Phe_tRNA_ligase_alpha1_bac"/>
</dbReference>
<dbReference type="InterPro" id="IPR002319">
    <property type="entry name" value="Phenylalanyl-tRNA_Synthase"/>
</dbReference>
<dbReference type="InterPro" id="IPR010978">
    <property type="entry name" value="tRNA-bd_arm"/>
</dbReference>
<dbReference type="NCBIfam" id="TIGR00468">
    <property type="entry name" value="pheS"/>
    <property type="match status" value="1"/>
</dbReference>
<dbReference type="PANTHER" id="PTHR11538:SF41">
    <property type="entry name" value="PHENYLALANINE--TRNA LIGASE, MITOCHONDRIAL"/>
    <property type="match status" value="1"/>
</dbReference>
<dbReference type="PANTHER" id="PTHR11538">
    <property type="entry name" value="PHENYLALANYL-TRNA SYNTHETASE"/>
    <property type="match status" value="1"/>
</dbReference>
<dbReference type="Pfam" id="PF02912">
    <property type="entry name" value="Phe_tRNA-synt_N"/>
    <property type="match status" value="1"/>
</dbReference>
<dbReference type="Pfam" id="PF01409">
    <property type="entry name" value="tRNA-synt_2d"/>
    <property type="match status" value="1"/>
</dbReference>
<dbReference type="SUPFAM" id="SSF55681">
    <property type="entry name" value="Class II aaRS and biotin synthetases"/>
    <property type="match status" value="1"/>
</dbReference>
<dbReference type="SUPFAM" id="SSF46589">
    <property type="entry name" value="tRNA-binding arm"/>
    <property type="match status" value="1"/>
</dbReference>
<dbReference type="PROSITE" id="PS50862">
    <property type="entry name" value="AA_TRNA_LIGASE_II"/>
    <property type="match status" value="1"/>
</dbReference>
<reference key="1">
    <citation type="submission" date="2006-08" db="EMBL/GenBank/DDBJ databases">
        <title>Complete sequence of Shewanella frigidimarina NCIMB 400.</title>
        <authorList>
            <consortium name="US DOE Joint Genome Institute"/>
            <person name="Copeland A."/>
            <person name="Lucas S."/>
            <person name="Lapidus A."/>
            <person name="Barry K."/>
            <person name="Detter J.C."/>
            <person name="Glavina del Rio T."/>
            <person name="Hammon N."/>
            <person name="Israni S."/>
            <person name="Dalin E."/>
            <person name="Tice H."/>
            <person name="Pitluck S."/>
            <person name="Fredrickson J.K."/>
            <person name="Kolker E."/>
            <person name="McCuel L.A."/>
            <person name="DiChristina T."/>
            <person name="Nealson K.H."/>
            <person name="Newman D."/>
            <person name="Tiedje J.M."/>
            <person name="Zhou J."/>
            <person name="Romine M.F."/>
            <person name="Culley D.E."/>
            <person name="Serres M."/>
            <person name="Chertkov O."/>
            <person name="Brettin T."/>
            <person name="Bruce D."/>
            <person name="Han C."/>
            <person name="Tapia R."/>
            <person name="Gilna P."/>
            <person name="Schmutz J."/>
            <person name="Larimer F."/>
            <person name="Land M."/>
            <person name="Hauser L."/>
            <person name="Kyrpides N."/>
            <person name="Mikhailova N."/>
            <person name="Richardson P."/>
        </authorList>
    </citation>
    <scope>NUCLEOTIDE SEQUENCE [LARGE SCALE GENOMIC DNA]</scope>
    <source>
        <strain>NCIMB 400</strain>
    </source>
</reference>
<protein>
    <recommendedName>
        <fullName evidence="1">Phenylalanine--tRNA ligase alpha subunit</fullName>
        <ecNumber evidence="1">6.1.1.20</ecNumber>
    </recommendedName>
    <alternativeName>
        <fullName evidence="1">Phenylalanyl-tRNA synthetase alpha subunit</fullName>
        <shortName evidence="1">PheRS</shortName>
    </alternativeName>
</protein>
<name>SYFA_SHEFN</name>
<keyword id="KW-0030">Aminoacyl-tRNA synthetase</keyword>
<keyword id="KW-0067">ATP-binding</keyword>
<keyword id="KW-0963">Cytoplasm</keyword>
<keyword id="KW-0436">Ligase</keyword>
<keyword id="KW-0460">Magnesium</keyword>
<keyword id="KW-0479">Metal-binding</keyword>
<keyword id="KW-0547">Nucleotide-binding</keyword>
<keyword id="KW-0648">Protein biosynthesis</keyword>
<keyword id="KW-1185">Reference proteome</keyword>
<feature type="chain" id="PRO_1000006896" description="Phenylalanine--tRNA ligase alpha subunit">
    <location>
        <begin position="1"/>
        <end position="327"/>
    </location>
</feature>
<feature type="binding site" evidence="1">
    <location>
        <position position="252"/>
    </location>
    <ligand>
        <name>Mg(2+)</name>
        <dbReference type="ChEBI" id="CHEBI:18420"/>
        <note>shared with beta subunit</note>
    </ligand>
</feature>
<comment type="catalytic activity">
    <reaction evidence="1">
        <text>tRNA(Phe) + L-phenylalanine + ATP = L-phenylalanyl-tRNA(Phe) + AMP + diphosphate + H(+)</text>
        <dbReference type="Rhea" id="RHEA:19413"/>
        <dbReference type="Rhea" id="RHEA-COMP:9668"/>
        <dbReference type="Rhea" id="RHEA-COMP:9699"/>
        <dbReference type="ChEBI" id="CHEBI:15378"/>
        <dbReference type="ChEBI" id="CHEBI:30616"/>
        <dbReference type="ChEBI" id="CHEBI:33019"/>
        <dbReference type="ChEBI" id="CHEBI:58095"/>
        <dbReference type="ChEBI" id="CHEBI:78442"/>
        <dbReference type="ChEBI" id="CHEBI:78531"/>
        <dbReference type="ChEBI" id="CHEBI:456215"/>
        <dbReference type="EC" id="6.1.1.20"/>
    </reaction>
</comment>
<comment type="cofactor">
    <cofactor evidence="1">
        <name>Mg(2+)</name>
        <dbReference type="ChEBI" id="CHEBI:18420"/>
    </cofactor>
    <text evidence="1">Binds 2 magnesium ions per tetramer.</text>
</comment>
<comment type="subunit">
    <text evidence="1">Tetramer of two alpha and two beta subunits.</text>
</comment>
<comment type="subcellular location">
    <subcellularLocation>
        <location evidence="1">Cytoplasm</location>
    </subcellularLocation>
</comment>
<comment type="similarity">
    <text evidence="1">Belongs to the class-II aminoacyl-tRNA synthetase family. Phe-tRNA synthetase alpha subunit type 1 subfamily.</text>
</comment>
<proteinExistence type="inferred from homology"/>
<accession>Q083K7</accession>
<evidence type="ECO:0000255" key="1">
    <source>
        <dbReference type="HAMAP-Rule" id="MF_00281"/>
    </source>
</evidence>
<organism>
    <name type="scientific">Shewanella frigidimarina (strain NCIMB 400)</name>
    <dbReference type="NCBI Taxonomy" id="318167"/>
    <lineage>
        <taxon>Bacteria</taxon>
        <taxon>Pseudomonadati</taxon>
        <taxon>Pseudomonadota</taxon>
        <taxon>Gammaproteobacteria</taxon>
        <taxon>Alteromonadales</taxon>
        <taxon>Shewanellaceae</taxon>
        <taxon>Shewanella</taxon>
    </lineage>
</organism>
<sequence length="327" mass="37286">MQQLTEIVEQALEVIEKASDLKTLDDIRVDYLGKKGKITDMMKMMGSLSAEEKPAFGAAVNQAKQAVQQQLTERIDGLKASELEAKLIAENIDVTLPGRTLDIGGLHPVTRTIERIETFFGELGFVVKQGPEIEDDFHNFDALNISEHHPARADHDTFYFNPKVMLRTQTSGVQIRTMEHEKPPLRIISPGRVYRNDYDQTHTPMFHQVEGLMVAENVNFAELKGILHDFLRNFFEEDLEVRFRPSYFPFTEPSAEVDVMGKNGKWLEVLGCGMVHPNVLRSVGIDPEKYSGFAFGMGVERLTMLRYGVNDLRAFFENDLRFLKQFK</sequence>
<gene>
    <name evidence="1" type="primary">pheS</name>
    <name type="ordered locus">Sfri_1708</name>
</gene>